<reference key="1">
    <citation type="journal article" date="1996" name="Science">
        <title>Complete genome sequence of the methanogenic archaeon, Methanococcus jannaschii.</title>
        <authorList>
            <person name="Bult C.J."/>
            <person name="White O."/>
            <person name="Olsen G.J."/>
            <person name="Zhou L."/>
            <person name="Fleischmann R.D."/>
            <person name="Sutton G.G."/>
            <person name="Blake J.A."/>
            <person name="FitzGerald L.M."/>
            <person name="Clayton R.A."/>
            <person name="Gocayne J.D."/>
            <person name="Kerlavage A.R."/>
            <person name="Dougherty B.A."/>
            <person name="Tomb J.-F."/>
            <person name="Adams M.D."/>
            <person name="Reich C.I."/>
            <person name="Overbeek R."/>
            <person name="Kirkness E.F."/>
            <person name="Weinstock K.G."/>
            <person name="Merrick J.M."/>
            <person name="Glodek A."/>
            <person name="Scott J.L."/>
            <person name="Geoghagen N.S.M."/>
            <person name="Weidman J.F."/>
            <person name="Fuhrmann J.L."/>
            <person name="Nguyen D."/>
            <person name="Utterback T.R."/>
            <person name="Kelley J.M."/>
            <person name="Peterson J.D."/>
            <person name="Sadow P.W."/>
            <person name="Hanna M.C."/>
            <person name="Cotton M.D."/>
            <person name="Roberts K.M."/>
            <person name="Hurst M.A."/>
            <person name="Kaine B.P."/>
            <person name="Borodovsky M."/>
            <person name="Klenk H.-P."/>
            <person name="Fraser C.M."/>
            <person name="Smith H.O."/>
            <person name="Woese C.R."/>
            <person name="Venter J.C."/>
        </authorList>
    </citation>
    <scope>NUCLEOTIDE SEQUENCE [LARGE SCALE GENOMIC DNA]</scope>
    <source>
        <strain>ATCC 43067 / DSM 2661 / JAL-1 / JCM 10045 / NBRC 100440</strain>
    </source>
</reference>
<evidence type="ECO:0000255" key="1">
    <source>
        <dbReference type="HAMAP-Rule" id="MF_01326"/>
    </source>
</evidence>
<evidence type="ECO:0000305" key="2"/>
<accession>P54038</accession>
<sequence length="120" mass="14103">MAFTKSKQPRKQRKALFNAPLHLRRKVMSAMLSKELKEKLGKNAIPVRKGDVVRIMRGDFKGLEGEVIKVDLKRYRIYVEGANNKRQDGREVPYPIHPSNVMIIKLYDKDEKRFKHIKNE</sequence>
<feature type="chain" id="PRO_0000130770" description="Large ribosomal subunit protein uL24">
    <location>
        <begin position="1"/>
        <end position="120"/>
    </location>
</feature>
<proteinExistence type="inferred from homology"/>
<name>RL24_METJA</name>
<comment type="function">
    <text evidence="1">One of two assembly initiator proteins, it binds directly to the 5'-end of the 23S rRNA, where it nucleates assembly of the 50S subunit.</text>
</comment>
<comment type="function">
    <text evidence="1">Located at the polypeptide exit tunnel on the outside of the subunit.</text>
</comment>
<comment type="subunit">
    <text evidence="1">Part of the 50S ribosomal subunit.</text>
</comment>
<comment type="similarity">
    <text evidence="1">Belongs to the universal ribosomal protein uL24 family.</text>
</comment>
<gene>
    <name evidence="1" type="primary">rpl24</name>
    <name type="ordered locus">MJ0467</name>
</gene>
<dbReference type="EMBL" id="L77117">
    <property type="protein sequence ID" value="AAB98456.1"/>
    <property type="molecule type" value="Genomic_DNA"/>
</dbReference>
<dbReference type="PIR" id="C64358">
    <property type="entry name" value="C64358"/>
</dbReference>
<dbReference type="RefSeq" id="WP_010869967.1">
    <property type="nucleotide sequence ID" value="NC_000909.1"/>
</dbReference>
<dbReference type="SMR" id="P54038"/>
<dbReference type="FunCoup" id="P54038">
    <property type="interactions" value="188"/>
</dbReference>
<dbReference type="STRING" id="243232.MJ_0467"/>
<dbReference type="PaxDb" id="243232-MJ_0467"/>
<dbReference type="EnsemblBacteria" id="AAB98456">
    <property type="protein sequence ID" value="AAB98456"/>
    <property type="gene ID" value="MJ_0467"/>
</dbReference>
<dbReference type="GeneID" id="1451329"/>
<dbReference type="KEGG" id="mja:MJ_0467"/>
<dbReference type="eggNOG" id="arCOG04094">
    <property type="taxonomic scope" value="Archaea"/>
</dbReference>
<dbReference type="HOGENOM" id="CLU_093240_2_1_2"/>
<dbReference type="InParanoid" id="P54038"/>
<dbReference type="OrthoDB" id="10899at2157"/>
<dbReference type="PhylomeDB" id="P54038"/>
<dbReference type="Proteomes" id="UP000000805">
    <property type="component" value="Chromosome"/>
</dbReference>
<dbReference type="GO" id="GO:0022625">
    <property type="term" value="C:cytosolic large ribosomal subunit"/>
    <property type="evidence" value="ECO:0000318"/>
    <property type="project" value="GO_Central"/>
</dbReference>
<dbReference type="GO" id="GO:0003723">
    <property type="term" value="F:RNA binding"/>
    <property type="evidence" value="ECO:0000318"/>
    <property type="project" value="GO_Central"/>
</dbReference>
<dbReference type="GO" id="GO:0019843">
    <property type="term" value="F:rRNA binding"/>
    <property type="evidence" value="ECO:0007669"/>
    <property type="project" value="UniProtKB-UniRule"/>
</dbReference>
<dbReference type="GO" id="GO:0003735">
    <property type="term" value="F:structural constituent of ribosome"/>
    <property type="evidence" value="ECO:0000318"/>
    <property type="project" value="GO_Central"/>
</dbReference>
<dbReference type="GO" id="GO:0002181">
    <property type="term" value="P:cytoplasmic translation"/>
    <property type="evidence" value="ECO:0000318"/>
    <property type="project" value="GO_Central"/>
</dbReference>
<dbReference type="GO" id="GO:0042273">
    <property type="term" value="P:ribosomal large subunit biogenesis"/>
    <property type="evidence" value="ECO:0000318"/>
    <property type="project" value="GO_Central"/>
</dbReference>
<dbReference type="CDD" id="cd06089">
    <property type="entry name" value="KOW_RPL26"/>
    <property type="match status" value="1"/>
</dbReference>
<dbReference type="FunFam" id="2.30.30.30:FF:000009">
    <property type="entry name" value="60S ribosomal protein L26"/>
    <property type="match status" value="1"/>
</dbReference>
<dbReference type="Gene3D" id="2.30.30.30">
    <property type="match status" value="1"/>
</dbReference>
<dbReference type="HAMAP" id="MF_01326_A">
    <property type="entry name" value="Ribosomal_uL24_A"/>
    <property type="match status" value="1"/>
</dbReference>
<dbReference type="InterPro" id="IPR005824">
    <property type="entry name" value="KOW"/>
</dbReference>
<dbReference type="InterPro" id="IPR014722">
    <property type="entry name" value="Rib_uL2_dom2"/>
</dbReference>
<dbReference type="InterPro" id="IPR005825">
    <property type="entry name" value="Ribosomal_uL24_CS"/>
</dbReference>
<dbReference type="InterPro" id="IPR005756">
    <property type="entry name" value="Ribosomal_uL24_euk/arc"/>
</dbReference>
<dbReference type="InterPro" id="IPR041988">
    <property type="entry name" value="Ribosomal_uL24_KOW"/>
</dbReference>
<dbReference type="InterPro" id="IPR008991">
    <property type="entry name" value="Translation_prot_SH3-like_sf"/>
</dbReference>
<dbReference type="NCBIfam" id="TIGR01080">
    <property type="entry name" value="rplX_A_E"/>
    <property type="match status" value="1"/>
</dbReference>
<dbReference type="PANTHER" id="PTHR11143">
    <property type="entry name" value="60S RIBOSOMAL PROTEIN L26 FAMILY MEMBER"/>
    <property type="match status" value="1"/>
</dbReference>
<dbReference type="Pfam" id="PF00467">
    <property type="entry name" value="KOW"/>
    <property type="match status" value="1"/>
</dbReference>
<dbReference type="Pfam" id="PF16906">
    <property type="entry name" value="Ribosomal_L26"/>
    <property type="match status" value="1"/>
</dbReference>
<dbReference type="SMART" id="SM00739">
    <property type="entry name" value="KOW"/>
    <property type="match status" value="1"/>
</dbReference>
<dbReference type="SUPFAM" id="SSF50104">
    <property type="entry name" value="Translation proteins SH3-like domain"/>
    <property type="match status" value="1"/>
</dbReference>
<dbReference type="PROSITE" id="PS01108">
    <property type="entry name" value="RIBOSOMAL_L24"/>
    <property type="match status" value="1"/>
</dbReference>
<keyword id="KW-1185">Reference proteome</keyword>
<keyword id="KW-0687">Ribonucleoprotein</keyword>
<keyword id="KW-0689">Ribosomal protein</keyword>
<keyword id="KW-0694">RNA-binding</keyword>
<keyword id="KW-0699">rRNA-binding</keyword>
<organism>
    <name type="scientific">Methanocaldococcus jannaschii (strain ATCC 43067 / DSM 2661 / JAL-1 / JCM 10045 / NBRC 100440)</name>
    <name type="common">Methanococcus jannaschii</name>
    <dbReference type="NCBI Taxonomy" id="243232"/>
    <lineage>
        <taxon>Archaea</taxon>
        <taxon>Methanobacteriati</taxon>
        <taxon>Methanobacteriota</taxon>
        <taxon>Methanomada group</taxon>
        <taxon>Methanococci</taxon>
        <taxon>Methanococcales</taxon>
        <taxon>Methanocaldococcaceae</taxon>
        <taxon>Methanocaldococcus</taxon>
    </lineage>
</organism>
<protein>
    <recommendedName>
        <fullName evidence="1">Large ribosomal subunit protein uL24</fullName>
    </recommendedName>
    <alternativeName>
        <fullName evidence="2">50S ribosomal protein L24</fullName>
    </alternativeName>
</protein>